<evidence type="ECO:0000255" key="1">
    <source>
        <dbReference type="HAMAP-Rule" id="MF_00089"/>
    </source>
</evidence>
<reference key="1">
    <citation type="journal article" date="2010" name="Genome Biol. Evol.">
        <title>Continuing evolution of Burkholderia mallei through genome reduction and large-scale rearrangements.</title>
        <authorList>
            <person name="Losada L."/>
            <person name="Ronning C.M."/>
            <person name="DeShazer D."/>
            <person name="Woods D."/>
            <person name="Fedorova N."/>
            <person name="Kim H.S."/>
            <person name="Shabalina S.A."/>
            <person name="Pearson T.R."/>
            <person name="Brinkac L."/>
            <person name="Tan P."/>
            <person name="Nandi T."/>
            <person name="Crabtree J."/>
            <person name="Badger J."/>
            <person name="Beckstrom-Sternberg S."/>
            <person name="Saqib M."/>
            <person name="Schutzer S.E."/>
            <person name="Keim P."/>
            <person name="Nierman W.C."/>
        </authorList>
    </citation>
    <scope>NUCLEOTIDE SEQUENCE [LARGE SCALE GENOMIC DNA]</scope>
    <source>
        <strain>668</strain>
    </source>
</reference>
<proteinExistence type="inferred from homology"/>
<accession>A3N7W7</accession>
<keyword id="KW-0004">4Fe-4S</keyword>
<keyword id="KW-0408">Iron</keyword>
<keyword id="KW-0411">Iron-sulfur</keyword>
<keyword id="KW-0456">Lyase</keyword>
<keyword id="KW-0479">Metal-binding</keyword>
<keyword id="KW-0949">S-adenosyl-L-methionine</keyword>
<keyword id="KW-0784">Thiamine biosynthesis</keyword>
<keyword id="KW-0862">Zinc</keyword>
<organism>
    <name type="scientific">Burkholderia pseudomallei (strain 668)</name>
    <dbReference type="NCBI Taxonomy" id="320373"/>
    <lineage>
        <taxon>Bacteria</taxon>
        <taxon>Pseudomonadati</taxon>
        <taxon>Pseudomonadota</taxon>
        <taxon>Betaproteobacteria</taxon>
        <taxon>Burkholderiales</taxon>
        <taxon>Burkholderiaceae</taxon>
        <taxon>Burkholderia</taxon>
        <taxon>pseudomallei group</taxon>
    </lineage>
</organism>
<protein>
    <recommendedName>
        <fullName evidence="1">Phosphomethylpyrimidine synthase</fullName>
        <ecNumber evidence="1">4.1.99.17</ecNumber>
    </recommendedName>
    <alternativeName>
        <fullName evidence="1">Hydroxymethylpyrimidine phosphate synthase</fullName>
        <shortName evidence="1">HMP-P synthase</shortName>
        <shortName evidence="1">HMP-phosphate synthase</shortName>
        <shortName evidence="1">HMPP synthase</shortName>
    </alternativeName>
    <alternativeName>
        <fullName evidence="1">Thiamine biosynthesis protein ThiC</fullName>
    </alternativeName>
</protein>
<comment type="function">
    <text evidence="1">Catalyzes the synthesis of the hydroxymethylpyrimidine phosphate (HMP-P) moiety of thiamine from aminoimidazole ribotide (AIR) in a radical S-adenosyl-L-methionine (SAM)-dependent reaction.</text>
</comment>
<comment type="catalytic activity">
    <reaction evidence="1">
        <text>5-amino-1-(5-phospho-beta-D-ribosyl)imidazole + S-adenosyl-L-methionine = 4-amino-2-methyl-5-(phosphooxymethyl)pyrimidine + CO + 5'-deoxyadenosine + formate + L-methionine + 3 H(+)</text>
        <dbReference type="Rhea" id="RHEA:24840"/>
        <dbReference type="ChEBI" id="CHEBI:15378"/>
        <dbReference type="ChEBI" id="CHEBI:15740"/>
        <dbReference type="ChEBI" id="CHEBI:17245"/>
        <dbReference type="ChEBI" id="CHEBI:17319"/>
        <dbReference type="ChEBI" id="CHEBI:57844"/>
        <dbReference type="ChEBI" id="CHEBI:58354"/>
        <dbReference type="ChEBI" id="CHEBI:59789"/>
        <dbReference type="ChEBI" id="CHEBI:137981"/>
        <dbReference type="EC" id="4.1.99.17"/>
    </reaction>
</comment>
<comment type="cofactor">
    <cofactor evidence="1">
        <name>[4Fe-4S] cluster</name>
        <dbReference type="ChEBI" id="CHEBI:49883"/>
    </cofactor>
    <text evidence="1">Binds 1 [4Fe-4S] cluster per subunit. The cluster is coordinated with 3 cysteines and an exchangeable S-adenosyl-L-methionine.</text>
</comment>
<comment type="pathway">
    <text evidence="1">Cofactor biosynthesis; thiamine diphosphate biosynthesis.</text>
</comment>
<comment type="subunit">
    <text evidence="1">Homodimer.</text>
</comment>
<comment type="similarity">
    <text evidence="1">Belongs to the ThiC family.</text>
</comment>
<dbReference type="EC" id="4.1.99.17" evidence="1"/>
<dbReference type="EMBL" id="CP000570">
    <property type="protein sequence ID" value="ABN82170.1"/>
    <property type="molecule type" value="Genomic_DNA"/>
</dbReference>
<dbReference type="RefSeq" id="WP_004521865.1">
    <property type="nucleotide sequence ID" value="NC_009074.1"/>
</dbReference>
<dbReference type="SMR" id="A3N7W7"/>
<dbReference type="GeneID" id="93059779"/>
<dbReference type="KEGG" id="bpd:BURPS668_1395"/>
<dbReference type="HOGENOM" id="CLU_013181_2_1_4"/>
<dbReference type="UniPathway" id="UPA00060"/>
<dbReference type="GO" id="GO:0005829">
    <property type="term" value="C:cytosol"/>
    <property type="evidence" value="ECO:0007669"/>
    <property type="project" value="TreeGrafter"/>
</dbReference>
<dbReference type="GO" id="GO:0051539">
    <property type="term" value="F:4 iron, 4 sulfur cluster binding"/>
    <property type="evidence" value="ECO:0007669"/>
    <property type="project" value="UniProtKB-KW"/>
</dbReference>
<dbReference type="GO" id="GO:0016830">
    <property type="term" value="F:carbon-carbon lyase activity"/>
    <property type="evidence" value="ECO:0007669"/>
    <property type="project" value="InterPro"/>
</dbReference>
<dbReference type="GO" id="GO:0008270">
    <property type="term" value="F:zinc ion binding"/>
    <property type="evidence" value="ECO:0007669"/>
    <property type="project" value="UniProtKB-UniRule"/>
</dbReference>
<dbReference type="GO" id="GO:0009228">
    <property type="term" value="P:thiamine biosynthetic process"/>
    <property type="evidence" value="ECO:0007669"/>
    <property type="project" value="UniProtKB-KW"/>
</dbReference>
<dbReference type="GO" id="GO:0009229">
    <property type="term" value="P:thiamine diphosphate biosynthetic process"/>
    <property type="evidence" value="ECO:0007669"/>
    <property type="project" value="UniProtKB-UniRule"/>
</dbReference>
<dbReference type="FunFam" id="3.20.20.540:FF:000001">
    <property type="entry name" value="Phosphomethylpyrimidine synthase"/>
    <property type="match status" value="1"/>
</dbReference>
<dbReference type="Gene3D" id="6.10.250.620">
    <property type="match status" value="1"/>
</dbReference>
<dbReference type="Gene3D" id="3.20.20.540">
    <property type="entry name" value="Radical SAM ThiC family, central domain"/>
    <property type="match status" value="1"/>
</dbReference>
<dbReference type="HAMAP" id="MF_00089">
    <property type="entry name" value="ThiC"/>
    <property type="match status" value="1"/>
</dbReference>
<dbReference type="InterPro" id="IPR037509">
    <property type="entry name" value="ThiC"/>
</dbReference>
<dbReference type="InterPro" id="IPR025747">
    <property type="entry name" value="ThiC-associated_dom"/>
</dbReference>
<dbReference type="InterPro" id="IPR038521">
    <property type="entry name" value="ThiC/Bza_core_dom"/>
</dbReference>
<dbReference type="InterPro" id="IPR002817">
    <property type="entry name" value="ThiC/BzaA/B"/>
</dbReference>
<dbReference type="NCBIfam" id="NF006763">
    <property type="entry name" value="PRK09284.1"/>
    <property type="match status" value="1"/>
</dbReference>
<dbReference type="NCBIfam" id="NF009895">
    <property type="entry name" value="PRK13352.1"/>
    <property type="match status" value="1"/>
</dbReference>
<dbReference type="NCBIfam" id="TIGR00190">
    <property type="entry name" value="thiC"/>
    <property type="match status" value="1"/>
</dbReference>
<dbReference type="PANTHER" id="PTHR30557:SF1">
    <property type="entry name" value="PHOSPHOMETHYLPYRIMIDINE SYNTHASE, CHLOROPLASTIC"/>
    <property type="match status" value="1"/>
</dbReference>
<dbReference type="PANTHER" id="PTHR30557">
    <property type="entry name" value="THIAMINE BIOSYNTHESIS PROTEIN THIC"/>
    <property type="match status" value="1"/>
</dbReference>
<dbReference type="Pfam" id="PF13667">
    <property type="entry name" value="ThiC-associated"/>
    <property type="match status" value="1"/>
</dbReference>
<dbReference type="Pfam" id="PF01964">
    <property type="entry name" value="ThiC_Rad_SAM"/>
    <property type="match status" value="1"/>
</dbReference>
<dbReference type="SFLD" id="SFLDF00407">
    <property type="entry name" value="phosphomethylpyrimidine_syntha"/>
    <property type="match status" value="1"/>
</dbReference>
<dbReference type="SFLD" id="SFLDG01114">
    <property type="entry name" value="phosphomethylpyrimidine_syntha"/>
    <property type="match status" value="1"/>
</dbReference>
<dbReference type="SFLD" id="SFLDS00113">
    <property type="entry name" value="Radical_SAM_Phosphomethylpyrim"/>
    <property type="match status" value="1"/>
</dbReference>
<sequence length="643" mass="71124">MNANPKFLSADARVDAAAVAPLPNSRKVYVTGSQPDIRVPMREITQADTPTSFGGEKNPPIYVYDTSGPYTDPDAKIDIRAGLPALRQRWIDARGDTETLAGLTSDYGRERAADPATAELRFPGLHRHPRRAKAGKNVTQMHYARQGIITPEMEYIAIRENQRRAEYLESLKASGPNGAKLAAMMGRQHAGQAFGAAAFGANAPAEITPEFVRDEVARGRAIIPANINHPETEPMIIGRNFLVKINANIGNSAVTSSIGEEVDKMTWAIRWGGDTVMDLSTGKHIHETREWIIRNSPVPIGTVPIYQALEKVNGKAEDLTWEIFRDTLIEQAEQGVDYFTIHAGVRLQYVPLTANRMTGIVSRGGSIMAKWCLAHHKESFLYEHFEEICEIMKAYDVSFSLGDGLRPGSIYDANDEAQLGELKTLGELTQIAWKHDVQVMIEGPGHVPMQLIKENMDLQLDWCKEAPFYTLGPLTTDIAPGYDHITSGIGAAMIGWFGTAMLCYVTPKEHLGLPNKDDVKEGIITYKLAAHAADLAKGHPGAQVRDNALSKARFEFRWQDQFNLGLDPDKAREFHDETLPKDSAKVAHFCSMCGPHFCSMKITQDVREFAAQQGVSENDALKKGMEVKAVEFVKSGSEIYHRQ</sequence>
<gene>
    <name evidence="1" type="primary">thiC</name>
    <name type="ordered locus">BURPS668_1395</name>
</gene>
<feature type="chain" id="PRO_1000004745" description="Phosphomethylpyrimidine synthase">
    <location>
        <begin position="1"/>
        <end position="643"/>
    </location>
</feature>
<feature type="binding site" evidence="1">
    <location>
        <position position="248"/>
    </location>
    <ligand>
        <name>substrate</name>
    </ligand>
</feature>
<feature type="binding site" evidence="1">
    <location>
        <position position="277"/>
    </location>
    <ligand>
        <name>substrate</name>
    </ligand>
</feature>
<feature type="binding site" evidence="1">
    <location>
        <position position="306"/>
    </location>
    <ligand>
        <name>substrate</name>
    </ligand>
</feature>
<feature type="binding site" evidence="1">
    <location>
        <position position="342"/>
    </location>
    <ligand>
        <name>substrate</name>
    </ligand>
</feature>
<feature type="binding site" evidence="1">
    <location>
        <begin position="362"/>
        <end position="364"/>
    </location>
    <ligand>
        <name>substrate</name>
    </ligand>
</feature>
<feature type="binding site" evidence="1">
    <location>
        <begin position="403"/>
        <end position="406"/>
    </location>
    <ligand>
        <name>substrate</name>
    </ligand>
</feature>
<feature type="binding site" evidence="1">
    <location>
        <position position="442"/>
    </location>
    <ligand>
        <name>substrate</name>
    </ligand>
</feature>
<feature type="binding site" evidence="1">
    <location>
        <position position="446"/>
    </location>
    <ligand>
        <name>Zn(2+)</name>
        <dbReference type="ChEBI" id="CHEBI:29105"/>
    </ligand>
</feature>
<feature type="binding site" evidence="1">
    <location>
        <position position="469"/>
    </location>
    <ligand>
        <name>substrate</name>
    </ligand>
</feature>
<feature type="binding site" evidence="1">
    <location>
        <position position="510"/>
    </location>
    <ligand>
        <name>Zn(2+)</name>
        <dbReference type="ChEBI" id="CHEBI:29105"/>
    </ligand>
</feature>
<feature type="binding site" evidence="1">
    <location>
        <position position="590"/>
    </location>
    <ligand>
        <name>[4Fe-4S] cluster</name>
        <dbReference type="ChEBI" id="CHEBI:49883"/>
        <note>4Fe-4S-S-AdoMet</note>
    </ligand>
</feature>
<feature type="binding site" evidence="1">
    <location>
        <position position="593"/>
    </location>
    <ligand>
        <name>[4Fe-4S] cluster</name>
        <dbReference type="ChEBI" id="CHEBI:49883"/>
        <note>4Fe-4S-S-AdoMet</note>
    </ligand>
</feature>
<feature type="binding site" evidence="1">
    <location>
        <position position="598"/>
    </location>
    <ligand>
        <name>[4Fe-4S] cluster</name>
        <dbReference type="ChEBI" id="CHEBI:49883"/>
        <note>4Fe-4S-S-AdoMet</note>
    </ligand>
</feature>
<name>THIC_BURP6</name>